<proteinExistence type="inferred from homology"/>
<sequence>MSNALEELKKYTTVVADTADFDVLSKYGSQDSTTNPSLVFQAASDPKYKSLIDDAIKYVNAKSGLSEKEKLSLAIDKLFVNFGVEILKIVPGRVSTEVDARLSYDIDANVKKGRELIALYKEAGIDKERVLIKLASTWEGIEAAKILEKEGIHCNLTLLFSLIQAAACAEAQVTLISPFVGRITDFYKSKQGVAGFEASKDPGVISVQQIYSYFKKHGYKTSVMGASFRNKEQTIELAGCDLLTISPNLLEELKNADASLVTKKLDSTKLPSDIPNKLDVSHSNFLWELNDNEMAYFKTGEGIRKFAEDLVKLENQIKKLL</sequence>
<organism>
    <name type="scientific">Dictyostelium discoideum</name>
    <name type="common">Social amoeba</name>
    <dbReference type="NCBI Taxonomy" id="44689"/>
    <lineage>
        <taxon>Eukaryota</taxon>
        <taxon>Amoebozoa</taxon>
        <taxon>Evosea</taxon>
        <taxon>Eumycetozoa</taxon>
        <taxon>Dictyostelia</taxon>
        <taxon>Dictyosteliales</taxon>
        <taxon>Dictyosteliaceae</taxon>
        <taxon>Dictyostelium</taxon>
    </lineage>
</organism>
<feature type="chain" id="PRO_0000331219" description="Probable transaldolase">
    <location>
        <begin position="1"/>
        <end position="321"/>
    </location>
</feature>
<feature type="active site" description="Schiff-base intermediate with substrate" evidence="2">
    <location>
        <position position="133"/>
    </location>
</feature>
<protein>
    <recommendedName>
        <fullName>Probable transaldolase</fullName>
        <ecNumber>2.2.1.2</ecNumber>
    </recommendedName>
</protein>
<gene>
    <name type="primary">tal</name>
    <name type="ORF">DDB_G0280909</name>
</gene>
<name>TALDO_DICDI</name>
<accession>Q54UP4</accession>
<keyword id="KW-0963">Cytoplasm</keyword>
<keyword id="KW-0570">Pentose shunt</keyword>
<keyword id="KW-1185">Reference proteome</keyword>
<keyword id="KW-0704">Schiff base</keyword>
<keyword id="KW-0808">Transferase</keyword>
<reference key="1">
    <citation type="journal article" date="2005" name="Nature">
        <title>The genome of the social amoeba Dictyostelium discoideum.</title>
        <authorList>
            <person name="Eichinger L."/>
            <person name="Pachebat J.A."/>
            <person name="Gloeckner G."/>
            <person name="Rajandream M.A."/>
            <person name="Sucgang R."/>
            <person name="Berriman M."/>
            <person name="Song J."/>
            <person name="Olsen R."/>
            <person name="Szafranski K."/>
            <person name="Xu Q."/>
            <person name="Tunggal B."/>
            <person name="Kummerfeld S."/>
            <person name="Madera M."/>
            <person name="Konfortov B.A."/>
            <person name="Rivero F."/>
            <person name="Bankier A.T."/>
            <person name="Lehmann R."/>
            <person name="Hamlin N."/>
            <person name="Davies R."/>
            <person name="Gaudet P."/>
            <person name="Fey P."/>
            <person name="Pilcher K."/>
            <person name="Chen G."/>
            <person name="Saunders D."/>
            <person name="Sodergren E.J."/>
            <person name="Davis P."/>
            <person name="Kerhornou A."/>
            <person name="Nie X."/>
            <person name="Hall N."/>
            <person name="Anjard C."/>
            <person name="Hemphill L."/>
            <person name="Bason N."/>
            <person name="Farbrother P."/>
            <person name="Desany B."/>
            <person name="Just E."/>
            <person name="Morio T."/>
            <person name="Rost R."/>
            <person name="Churcher C.M."/>
            <person name="Cooper J."/>
            <person name="Haydock S."/>
            <person name="van Driessche N."/>
            <person name="Cronin A."/>
            <person name="Goodhead I."/>
            <person name="Muzny D.M."/>
            <person name="Mourier T."/>
            <person name="Pain A."/>
            <person name="Lu M."/>
            <person name="Harper D."/>
            <person name="Lindsay R."/>
            <person name="Hauser H."/>
            <person name="James K.D."/>
            <person name="Quiles M."/>
            <person name="Madan Babu M."/>
            <person name="Saito T."/>
            <person name="Buchrieser C."/>
            <person name="Wardroper A."/>
            <person name="Felder M."/>
            <person name="Thangavelu M."/>
            <person name="Johnson D."/>
            <person name="Knights A."/>
            <person name="Loulseged H."/>
            <person name="Mungall K.L."/>
            <person name="Oliver K."/>
            <person name="Price C."/>
            <person name="Quail M.A."/>
            <person name="Urushihara H."/>
            <person name="Hernandez J."/>
            <person name="Rabbinowitsch E."/>
            <person name="Steffen D."/>
            <person name="Sanders M."/>
            <person name="Ma J."/>
            <person name="Kohara Y."/>
            <person name="Sharp S."/>
            <person name="Simmonds M.N."/>
            <person name="Spiegler S."/>
            <person name="Tivey A."/>
            <person name="Sugano S."/>
            <person name="White B."/>
            <person name="Walker D."/>
            <person name="Woodward J.R."/>
            <person name="Winckler T."/>
            <person name="Tanaka Y."/>
            <person name="Shaulsky G."/>
            <person name="Schleicher M."/>
            <person name="Weinstock G.M."/>
            <person name="Rosenthal A."/>
            <person name="Cox E.C."/>
            <person name="Chisholm R.L."/>
            <person name="Gibbs R.A."/>
            <person name="Loomis W.F."/>
            <person name="Platzer M."/>
            <person name="Kay R.R."/>
            <person name="Williams J.G."/>
            <person name="Dear P.H."/>
            <person name="Noegel A.A."/>
            <person name="Barrell B.G."/>
            <person name="Kuspa A."/>
        </authorList>
    </citation>
    <scope>NUCLEOTIDE SEQUENCE [LARGE SCALE GENOMIC DNA]</scope>
    <source>
        <strain>AX4</strain>
    </source>
</reference>
<comment type="function">
    <text evidence="1">Transaldolase is important for the balance of metabolites in the pentose-phosphate pathway.</text>
</comment>
<comment type="catalytic activity">
    <reaction evidence="2">
        <text>D-sedoheptulose 7-phosphate + D-glyceraldehyde 3-phosphate = D-erythrose 4-phosphate + beta-D-fructose 6-phosphate</text>
        <dbReference type="Rhea" id="RHEA:17053"/>
        <dbReference type="ChEBI" id="CHEBI:16897"/>
        <dbReference type="ChEBI" id="CHEBI:57483"/>
        <dbReference type="ChEBI" id="CHEBI:57634"/>
        <dbReference type="ChEBI" id="CHEBI:59776"/>
        <dbReference type="EC" id="2.2.1.2"/>
    </reaction>
</comment>
<comment type="pathway">
    <text>Carbohydrate degradation; pentose phosphate pathway; D-glyceraldehyde 3-phosphate and beta-D-fructose 6-phosphate from D-ribose 5-phosphate and D-xylulose 5-phosphate (non-oxidative stage): step 2/3.</text>
</comment>
<comment type="subunit">
    <text evidence="1">Homodimer.</text>
</comment>
<comment type="subcellular location">
    <subcellularLocation>
        <location evidence="3">Cytoplasm</location>
    </subcellularLocation>
</comment>
<comment type="similarity">
    <text evidence="3">Belongs to the transaldolase family. Type 1 subfamily.</text>
</comment>
<evidence type="ECO:0000250" key="1"/>
<evidence type="ECO:0000255" key="2">
    <source>
        <dbReference type="PROSITE-ProRule" id="PRU10019"/>
    </source>
</evidence>
<evidence type="ECO:0000305" key="3"/>
<dbReference type="EC" id="2.2.1.2"/>
<dbReference type="EMBL" id="AAFI02000039">
    <property type="protein sequence ID" value="EAL66996.1"/>
    <property type="molecule type" value="Genomic_DNA"/>
</dbReference>
<dbReference type="RefSeq" id="XP_640977.1">
    <property type="nucleotide sequence ID" value="XM_635885.1"/>
</dbReference>
<dbReference type="SMR" id="Q54UP4"/>
<dbReference type="FunCoup" id="Q54UP4">
    <property type="interactions" value="608"/>
</dbReference>
<dbReference type="STRING" id="44689.Q54UP4"/>
<dbReference type="PaxDb" id="44689-DDB0231283"/>
<dbReference type="EnsemblProtists" id="EAL66996">
    <property type="protein sequence ID" value="EAL66996"/>
    <property type="gene ID" value="DDB_G0280909"/>
</dbReference>
<dbReference type="GeneID" id="8622781"/>
<dbReference type="KEGG" id="ddi:DDB_G0280909"/>
<dbReference type="dictyBase" id="DDB_G0280909">
    <property type="gene designation" value="tal"/>
</dbReference>
<dbReference type="VEuPathDB" id="AmoebaDB:DDB_G0280909"/>
<dbReference type="eggNOG" id="KOG2772">
    <property type="taxonomic scope" value="Eukaryota"/>
</dbReference>
<dbReference type="HOGENOM" id="CLU_047470_0_1_1"/>
<dbReference type="InParanoid" id="Q54UP4"/>
<dbReference type="OMA" id="THAEFLW"/>
<dbReference type="PhylomeDB" id="Q54UP4"/>
<dbReference type="Reactome" id="R-DDI-163754">
    <property type="pathway name" value="Insulin effects increased synthesis of Xylulose-5-Phosphate"/>
</dbReference>
<dbReference type="Reactome" id="R-DDI-71336">
    <property type="pathway name" value="Pentose phosphate pathway"/>
</dbReference>
<dbReference type="UniPathway" id="UPA00115">
    <property type="reaction ID" value="UER00414"/>
</dbReference>
<dbReference type="PRO" id="PR:Q54UP4"/>
<dbReference type="Proteomes" id="UP000002195">
    <property type="component" value="Chromosome 3"/>
</dbReference>
<dbReference type="GO" id="GO:0005737">
    <property type="term" value="C:cytoplasm"/>
    <property type="evidence" value="ECO:0007669"/>
    <property type="project" value="UniProtKB-SubCell"/>
</dbReference>
<dbReference type="GO" id="GO:0005634">
    <property type="term" value="C:nucleus"/>
    <property type="evidence" value="ECO:0000318"/>
    <property type="project" value="GO_Central"/>
</dbReference>
<dbReference type="GO" id="GO:0004801">
    <property type="term" value="F:transaldolase activity"/>
    <property type="evidence" value="ECO:0000318"/>
    <property type="project" value="GO_Central"/>
</dbReference>
<dbReference type="GO" id="GO:0005975">
    <property type="term" value="P:carbohydrate metabolic process"/>
    <property type="evidence" value="ECO:0007669"/>
    <property type="project" value="InterPro"/>
</dbReference>
<dbReference type="GO" id="GO:0009052">
    <property type="term" value="P:pentose-phosphate shunt, non-oxidative branch"/>
    <property type="evidence" value="ECO:0000318"/>
    <property type="project" value="GO_Central"/>
</dbReference>
<dbReference type="CDD" id="cd00957">
    <property type="entry name" value="Transaldolase_TalAB"/>
    <property type="match status" value="1"/>
</dbReference>
<dbReference type="FunFam" id="3.20.20.70:FF:000131">
    <property type="entry name" value="Transaldolase"/>
    <property type="match status" value="1"/>
</dbReference>
<dbReference type="Gene3D" id="3.20.20.70">
    <property type="entry name" value="Aldolase class I"/>
    <property type="match status" value="1"/>
</dbReference>
<dbReference type="InterPro" id="IPR013785">
    <property type="entry name" value="Aldolase_TIM"/>
</dbReference>
<dbReference type="InterPro" id="IPR001585">
    <property type="entry name" value="TAL/FSA"/>
</dbReference>
<dbReference type="InterPro" id="IPR004730">
    <property type="entry name" value="Transaldolase_1"/>
</dbReference>
<dbReference type="InterPro" id="IPR018225">
    <property type="entry name" value="Transaldolase_AS"/>
</dbReference>
<dbReference type="NCBIfam" id="TIGR00874">
    <property type="entry name" value="talAB"/>
    <property type="match status" value="1"/>
</dbReference>
<dbReference type="PANTHER" id="PTHR10683">
    <property type="entry name" value="TRANSALDOLASE"/>
    <property type="match status" value="1"/>
</dbReference>
<dbReference type="PANTHER" id="PTHR10683:SF18">
    <property type="entry name" value="TRANSALDOLASE"/>
    <property type="match status" value="1"/>
</dbReference>
<dbReference type="Pfam" id="PF00923">
    <property type="entry name" value="TAL_FSA"/>
    <property type="match status" value="1"/>
</dbReference>
<dbReference type="SUPFAM" id="SSF51569">
    <property type="entry name" value="Aldolase"/>
    <property type="match status" value="1"/>
</dbReference>
<dbReference type="PROSITE" id="PS01054">
    <property type="entry name" value="TRANSALDOLASE_1"/>
    <property type="match status" value="1"/>
</dbReference>
<dbReference type="PROSITE" id="PS00958">
    <property type="entry name" value="TRANSALDOLASE_2"/>
    <property type="match status" value="1"/>
</dbReference>